<feature type="chain" id="PRO_1000196695" description="S-adenosylmethionine synthase">
    <location>
        <begin position="1"/>
        <end position="378"/>
    </location>
</feature>
<feature type="region of interest" description="Flexible loop" evidence="1">
    <location>
        <begin position="99"/>
        <end position="109"/>
    </location>
</feature>
<feature type="binding site" description="in other chain" evidence="1">
    <location>
        <position position="15"/>
    </location>
    <ligand>
        <name>ATP</name>
        <dbReference type="ChEBI" id="CHEBI:30616"/>
        <note>ligand shared between two neighboring subunits</note>
    </ligand>
</feature>
<feature type="binding site" evidence="1">
    <location>
        <position position="17"/>
    </location>
    <ligand>
        <name>Mg(2+)</name>
        <dbReference type="ChEBI" id="CHEBI:18420"/>
    </ligand>
</feature>
<feature type="binding site" evidence="1">
    <location>
        <position position="43"/>
    </location>
    <ligand>
        <name>K(+)</name>
        <dbReference type="ChEBI" id="CHEBI:29103"/>
    </ligand>
</feature>
<feature type="binding site" description="in other chain" evidence="1">
    <location>
        <position position="56"/>
    </location>
    <ligand>
        <name>L-methionine</name>
        <dbReference type="ChEBI" id="CHEBI:57844"/>
        <note>ligand shared between two neighboring subunits</note>
    </ligand>
</feature>
<feature type="binding site" description="in other chain" evidence="1">
    <location>
        <position position="99"/>
    </location>
    <ligand>
        <name>L-methionine</name>
        <dbReference type="ChEBI" id="CHEBI:57844"/>
        <note>ligand shared between two neighboring subunits</note>
    </ligand>
</feature>
<feature type="binding site" description="in other chain" evidence="1">
    <location>
        <begin position="164"/>
        <end position="166"/>
    </location>
    <ligand>
        <name>ATP</name>
        <dbReference type="ChEBI" id="CHEBI:30616"/>
        <note>ligand shared between two neighboring subunits</note>
    </ligand>
</feature>
<feature type="binding site" description="in other chain" evidence="1">
    <location>
        <begin position="230"/>
        <end position="231"/>
    </location>
    <ligand>
        <name>ATP</name>
        <dbReference type="ChEBI" id="CHEBI:30616"/>
        <note>ligand shared between two neighboring subunits</note>
    </ligand>
</feature>
<feature type="binding site" evidence="1">
    <location>
        <position position="239"/>
    </location>
    <ligand>
        <name>ATP</name>
        <dbReference type="ChEBI" id="CHEBI:30616"/>
        <note>ligand shared between two neighboring subunits</note>
    </ligand>
</feature>
<feature type="binding site" evidence="1">
    <location>
        <position position="239"/>
    </location>
    <ligand>
        <name>L-methionine</name>
        <dbReference type="ChEBI" id="CHEBI:57844"/>
        <note>ligand shared between two neighboring subunits</note>
    </ligand>
</feature>
<feature type="binding site" description="in other chain" evidence="1">
    <location>
        <begin position="245"/>
        <end position="246"/>
    </location>
    <ligand>
        <name>ATP</name>
        <dbReference type="ChEBI" id="CHEBI:30616"/>
        <note>ligand shared between two neighboring subunits</note>
    </ligand>
</feature>
<feature type="binding site" evidence="1">
    <location>
        <position position="262"/>
    </location>
    <ligand>
        <name>ATP</name>
        <dbReference type="ChEBI" id="CHEBI:30616"/>
        <note>ligand shared between two neighboring subunits</note>
    </ligand>
</feature>
<feature type="binding site" evidence="1">
    <location>
        <position position="266"/>
    </location>
    <ligand>
        <name>ATP</name>
        <dbReference type="ChEBI" id="CHEBI:30616"/>
        <note>ligand shared between two neighboring subunits</note>
    </ligand>
</feature>
<feature type="binding site" description="in other chain" evidence="1">
    <location>
        <position position="270"/>
    </location>
    <ligand>
        <name>L-methionine</name>
        <dbReference type="ChEBI" id="CHEBI:57844"/>
        <note>ligand shared between two neighboring subunits</note>
    </ligand>
</feature>
<dbReference type="EC" id="2.5.1.6" evidence="1"/>
<dbReference type="EMBL" id="CP001158">
    <property type="protein sequence ID" value="ACL30206.1"/>
    <property type="molecule type" value="Genomic_DNA"/>
</dbReference>
<dbReference type="RefSeq" id="WP_009874364.1">
    <property type="nucleotide sequence ID" value="NC_011834.1"/>
</dbReference>
<dbReference type="SMR" id="B8D7U1"/>
<dbReference type="KEGG" id="bau:BUAPTUC7_402"/>
<dbReference type="HOGENOM" id="CLU_041802_1_1_6"/>
<dbReference type="UniPathway" id="UPA00315">
    <property type="reaction ID" value="UER00080"/>
</dbReference>
<dbReference type="GO" id="GO:0005737">
    <property type="term" value="C:cytoplasm"/>
    <property type="evidence" value="ECO:0007669"/>
    <property type="project" value="UniProtKB-SubCell"/>
</dbReference>
<dbReference type="GO" id="GO:0005524">
    <property type="term" value="F:ATP binding"/>
    <property type="evidence" value="ECO:0007669"/>
    <property type="project" value="UniProtKB-UniRule"/>
</dbReference>
<dbReference type="GO" id="GO:0000287">
    <property type="term" value="F:magnesium ion binding"/>
    <property type="evidence" value="ECO:0007669"/>
    <property type="project" value="UniProtKB-UniRule"/>
</dbReference>
<dbReference type="GO" id="GO:0004478">
    <property type="term" value="F:methionine adenosyltransferase activity"/>
    <property type="evidence" value="ECO:0007669"/>
    <property type="project" value="UniProtKB-UniRule"/>
</dbReference>
<dbReference type="GO" id="GO:0006730">
    <property type="term" value="P:one-carbon metabolic process"/>
    <property type="evidence" value="ECO:0007669"/>
    <property type="project" value="UniProtKB-KW"/>
</dbReference>
<dbReference type="GO" id="GO:0006556">
    <property type="term" value="P:S-adenosylmethionine biosynthetic process"/>
    <property type="evidence" value="ECO:0007669"/>
    <property type="project" value="UniProtKB-UniRule"/>
</dbReference>
<dbReference type="CDD" id="cd18079">
    <property type="entry name" value="S-AdoMet_synt"/>
    <property type="match status" value="1"/>
</dbReference>
<dbReference type="FunFam" id="3.30.300.10:FF:000003">
    <property type="entry name" value="S-adenosylmethionine synthase"/>
    <property type="match status" value="1"/>
</dbReference>
<dbReference type="Gene3D" id="3.30.300.10">
    <property type="match status" value="3"/>
</dbReference>
<dbReference type="HAMAP" id="MF_00086">
    <property type="entry name" value="S_AdoMet_synth1"/>
    <property type="match status" value="1"/>
</dbReference>
<dbReference type="InterPro" id="IPR022631">
    <property type="entry name" value="ADOMET_SYNTHASE_CS"/>
</dbReference>
<dbReference type="InterPro" id="IPR022630">
    <property type="entry name" value="S-AdoMet_synt_C"/>
</dbReference>
<dbReference type="InterPro" id="IPR022629">
    <property type="entry name" value="S-AdoMet_synt_central"/>
</dbReference>
<dbReference type="InterPro" id="IPR022628">
    <property type="entry name" value="S-AdoMet_synt_N"/>
</dbReference>
<dbReference type="InterPro" id="IPR002133">
    <property type="entry name" value="S-AdoMet_synthetase"/>
</dbReference>
<dbReference type="InterPro" id="IPR022636">
    <property type="entry name" value="S-AdoMet_synthetase_sfam"/>
</dbReference>
<dbReference type="NCBIfam" id="TIGR01034">
    <property type="entry name" value="metK"/>
    <property type="match status" value="1"/>
</dbReference>
<dbReference type="PANTHER" id="PTHR11964">
    <property type="entry name" value="S-ADENOSYLMETHIONINE SYNTHETASE"/>
    <property type="match status" value="1"/>
</dbReference>
<dbReference type="Pfam" id="PF02773">
    <property type="entry name" value="S-AdoMet_synt_C"/>
    <property type="match status" value="1"/>
</dbReference>
<dbReference type="Pfam" id="PF02772">
    <property type="entry name" value="S-AdoMet_synt_M"/>
    <property type="match status" value="1"/>
</dbReference>
<dbReference type="Pfam" id="PF00438">
    <property type="entry name" value="S-AdoMet_synt_N"/>
    <property type="match status" value="1"/>
</dbReference>
<dbReference type="PIRSF" id="PIRSF000497">
    <property type="entry name" value="MAT"/>
    <property type="match status" value="1"/>
</dbReference>
<dbReference type="SUPFAM" id="SSF55973">
    <property type="entry name" value="S-adenosylmethionine synthetase"/>
    <property type="match status" value="3"/>
</dbReference>
<dbReference type="PROSITE" id="PS00376">
    <property type="entry name" value="ADOMET_SYNTHASE_1"/>
    <property type="match status" value="1"/>
</dbReference>
<dbReference type="PROSITE" id="PS00377">
    <property type="entry name" value="ADOMET_SYNTHASE_2"/>
    <property type="match status" value="1"/>
</dbReference>
<comment type="function">
    <text evidence="1">Catalyzes the formation of S-adenosylmethionine (AdoMet) from methionine and ATP. The overall synthetic reaction is composed of two sequential steps, AdoMet formation and the subsequent tripolyphosphate hydrolysis which occurs prior to release of AdoMet from the enzyme.</text>
</comment>
<comment type="catalytic activity">
    <reaction evidence="1">
        <text>L-methionine + ATP + H2O = S-adenosyl-L-methionine + phosphate + diphosphate</text>
        <dbReference type="Rhea" id="RHEA:21080"/>
        <dbReference type="ChEBI" id="CHEBI:15377"/>
        <dbReference type="ChEBI" id="CHEBI:30616"/>
        <dbReference type="ChEBI" id="CHEBI:33019"/>
        <dbReference type="ChEBI" id="CHEBI:43474"/>
        <dbReference type="ChEBI" id="CHEBI:57844"/>
        <dbReference type="ChEBI" id="CHEBI:59789"/>
        <dbReference type="EC" id="2.5.1.6"/>
    </reaction>
</comment>
<comment type="cofactor">
    <cofactor evidence="1">
        <name>Mg(2+)</name>
        <dbReference type="ChEBI" id="CHEBI:18420"/>
    </cofactor>
    <text evidence="1">Binds 2 divalent ions per subunit.</text>
</comment>
<comment type="cofactor">
    <cofactor evidence="1">
        <name>K(+)</name>
        <dbReference type="ChEBI" id="CHEBI:29103"/>
    </cofactor>
    <text evidence="1">Binds 1 potassium ion per subunit.</text>
</comment>
<comment type="pathway">
    <text evidence="1">Amino-acid biosynthesis; S-adenosyl-L-methionine biosynthesis; S-adenosyl-L-methionine from L-methionine: step 1/1.</text>
</comment>
<comment type="subunit">
    <text evidence="1">Homotetramer; dimer of dimers.</text>
</comment>
<comment type="subcellular location">
    <subcellularLocation>
        <location evidence="1">Cytoplasm</location>
    </subcellularLocation>
</comment>
<comment type="similarity">
    <text evidence="1">Belongs to the AdoMet synthase family.</text>
</comment>
<proteinExistence type="inferred from homology"/>
<reference key="1">
    <citation type="journal article" date="2009" name="Science">
        <title>The dynamics and time scale of ongoing genomic erosion in symbiotic bacteria.</title>
        <authorList>
            <person name="Moran N.A."/>
            <person name="McLaughlin H.J."/>
            <person name="Sorek R."/>
        </authorList>
    </citation>
    <scope>NUCLEOTIDE SEQUENCE [LARGE SCALE GENOMIC DNA]</scope>
    <source>
        <strain>Tuc7</strain>
    </source>
</reference>
<sequence length="378" mass="41706">MTEYLFTSESVSEGHPDKIADQISDALLDEILKQDLKARVACETYVKTGMVLIGGEITTTAWVDVEEITRKTINDIGYVNSDAGFDANSCAVLSAIGKQSPDINQGINRFDPLKQGAGDQGIIFGYATNETEFFMPAPITYAHLLMQKQSELRKKNILPWLRPDAKSQVTFKYNNGNIIAIDTVVLSTQHQENITQKYLKEAVMDEIIKPVLPDKWLTKNTKFFINPTGRFVIGGPMGDCGVTGRKIIVDTYGGMSRHGGGAFSGKDPSKVDRSAAYAARYVAKNIVASGLAARCEIQLSYAIGIAEPISIMIDTFNTGKISNSALISLVRSIFDLRPYGLIKMLNLLQPIYLKTAVYGHFGRKEFPWENLDKVNELS</sequence>
<accession>B8D7U1</accession>
<organism>
    <name type="scientific">Buchnera aphidicola subsp. Acyrthosiphon pisum (strain Tuc7)</name>
    <dbReference type="NCBI Taxonomy" id="561501"/>
    <lineage>
        <taxon>Bacteria</taxon>
        <taxon>Pseudomonadati</taxon>
        <taxon>Pseudomonadota</taxon>
        <taxon>Gammaproteobacteria</taxon>
        <taxon>Enterobacterales</taxon>
        <taxon>Erwiniaceae</taxon>
        <taxon>Buchnera</taxon>
    </lineage>
</organism>
<keyword id="KW-0067">ATP-binding</keyword>
<keyword id="KW-0963">Cytoplasm</keyword>
<keyword id="KW-0460">Magnesium</keyword>
<keyword id="KW-0479">Metal-binding</keyword>
<keyword id="KW-0547">Nucleotide-binding</keyword>
<keyword id="KW-0554">One-carbon metabolism</keyword>
<keyword id="KW-0630">Potassium</keyword>
<keyword id="KW-0808">Transferase</keyword>
<gene>
    <name evidence="1" type="primary">metK</name>
    <name type="ordered locus">BUAPTUC7_402</name>
</gene>
<evidence type="ECO:0000255" key="1">
    <source>
        <dbReference type="HAMAP-Rule" id="MF_00086"/>
    </source>
</evidence>
<name>METK_BUCAT</name>
<protein>
    <recommendedName>
        <fullName evidence="1">S-adenosylmethionine synthase</fullName>
        <shortName evidence="1">AdoMet synthase</shortName>
        <ecNumber evidence="1">2.5.1.6</ecNumber>
    </recommendedName>
    <alternativeName>
        <fullName evidence="1">MAT</fullName>
    </alternativeName>
    <alternativeName>
        <fullName evidence="1">Methionine adenosyltransferase</fullName>
    </alternativeName>
</protein>